<comment type="subunit">
    <text evidence="1">Homohexamer.</text>
</comment>
<comment type="similarity">
    <text evidence="2">Belongs to the GTP cyclohydrolase I type 2/NIF3 family.</text>
</comment>
<feature type="chain" id="PRO_0000147299" description="GTP cyclohydrolase 1 type 2 homolog">
    <location>
        <begin position="1"/>
        <end position="247"/>
    </location>
</feature>
<feature type="binding site" evidence="1">
    <location>
        <position position="63"/>
    </location>
    <ligand>
        <name>a divalent metal cation</name>
        <dbReference type="ChEBI" id="CHEBI:60240"/>
        <label>1</label>
    </ligand>
</feature>
<feature type="binding site" evidence="1">
    <location>
        <position position="64"/>
    </location>
    <ligand>
        <name>a divalent metal cation</name>
        <dbReference type="ChEBI" id="CHEBI:60240"/>
        <label>2</label>
    </ligand>
</feature>
<feature type="binding site" evidence="1">
    <location>
        <position position="101"/>
    </location>
    <ligand>
        <name>a divalent metal cation</name>
        <dbReference type="ChEBI" id="CHEBI:60240"/>
        <label>1</label>
    </ligand>
</feature>
<feature type="binding site" evidence="1">
    <location>
        <position position="215"/>
    </location>
    <ligand>
        <name>a divalent metal cation</name>
        <dbReference type="ChEBI" id="CHEBI:60240"/>
        <label>2</label>
    </ligand>
</feature>
<feature type="binding site" evidence="1">
    <location>
        <position position="219"/>
    </location>
    <ligand>
        <name>a divalent metal cation</name>
        <dbReference type="ChEBI" id="CHEBI:60240"/>
        <label>1</label>
    </ligand>
</feature>
<feature type="binding site" evidence="1">
    <location>
        <position position="219"/>
    </location>
    <ligand>
        <name>a divalent metal cation</name>
        <dbReference type="ChEBI" id="CHEBI:60240"/>
        <label>2</label>
    </ligand>
</feature>
<proteinExistence type="inferred from homology"/>
<sequence length="247" mass="28304">MNNFELEKIVNKKLNSNQYNDVIPNGLQIEGRPKIKKIVTGVTACQLLIDLAISNNAHGIIVHHGLFWDNHPKIIKGIYRHRIKSILANNINLYSWHFPLDVHPILGNNAQIGHILNINVRGYIKSCVPWGMLKEPIKSKDMSQLITQKFHRVPFYYGNNITQNIHKIAWCSGKGQKFINFIPEYGVDTFLTGEVSEETIHFAHENKLHFFSIGHHASEINGIKALTNWLKIKFSLDINFINIDNPI</sequence>
<evidence type="ECO:0000250" key="1">
    <source>
        <dbReference type="UniProtKB" id="P0AFP6"/>
    </source>
</evidence>
<evidence type="ECO:0000305" key="2"/>
<dbReference type="EMBL" id="AE016826">
    <property type="protein sequence ID" value="AAO27004.1"/>
    <property type="molecule type" value="Genomic_DNA"/>
</dbReference>
<dbReference type="RefSeq" id="WP_011091405.1">
    <property type="nucleotide sequence ID" value="NC_004545.1"/>
</dbReference>
<dbReference type="SMR" id="Q89AJ8"/>
<dbReference type="STRING" id="224915.bbp_279"/>
<dbReference type="KEGG" id="bab:bbp_279"/>
<dbReference type="eggNOG" id="COG0327">
    <property type="taxonomic scope" value="Bacteria"/>
</dbReference>
<dbReference type="HOGENOM" id="CLU_037423_3_0_6"/>
<dbReference type="OrthoDB" id="9800881at2"/>
<dbReference type="Proteomes" id="UP000000601">
    <property type="component" value="Chromosome"/>
</dbReference>
<dbReference type="GO" id="GO:0005737">
    <property type="term" value="C:cytoplasm"/>
    <property type="evidence" value="ECO:0007669"/>
    <property type="project" value="TreeGrafter"/>
</dbReference>
<dbReference type="GO" id="GO:0046872">
    <property type="term" value="F:metal ion binding"/>
    <property type="evidence" value="ECO:0007669"/>
    <property type="project" value="UniProtKB-KW"/>
</dbReference>
<dbReference type="Gene3D" id="3.40.1390.30">
    <property type="entry name" value="NIF3 (NGG1p interacting factor 3)-like"/>
    <property type="match status" value="2"/>
</dbReference>
<dbReference type="InterPro" id="IPR002678">
    <property type="entry name" value="DUF34/NIF3"/>
</dbReference>
<dbReference type="InterPro" id="IPR036069">
    <property type="entry name" value="DUF34/NIF3_sf"/>
</dbReference>
<dbReference type="NCBIfam" id="TIGR00486">
    <property type="entry name" value="YbgI_SA1388"/>
    <property type="match status" value="1"/>
</dbReference>
<dbReference type="PANTHER" id="PTHR13799:SF14">
    <property type="entry name" value="GTP CYCLOHYDROLASE 1 TYPE 2 HOMOLOG"/>
    <property type="match status" value="1"/>
</dbReference>
<dbReference type="PANTHER" id="PTHR13799">
    <property type="entry name" value="NGG1 INTERACTING FACTOR 3"/>
    <property type="match status" value="1"/>
</dbReference>
<dbReference type="Pfam" id="PF01784">
    <property type="entry name" value="DUF34_NIF3"/>
    <property type="match status" value="1"/>
</dbReference>
<dbReference type="SUPFAM" id="SSF102705">
    <property type="entry name" value="NIF3 (NGG1p interacting factor 3)-like"/>
    <property type="match status" value="1"/>
</dbReference>
<organism>
    <name type="scientific">Buchnera aphidicola subsp. Baizongia pistaciae (strain Bp)</name>
    <dbReference type="NCBI Taxonomy" id="224915"/>
    <lineage>
        <taxon>Bacteria</taxon>
        <taxon>Pseudomonadati</taxon>
        <taxon>Pseudomonadota</taxon>
        <taxon>Gammaproteobacteria</taxon>
        <taxon>Enterobacterales</taxon>
        <taxon>Erwiniaceae</taxon>
        <taxon>Buchnera</taxon>
    </lineage>
</organism>
<keyword id="KW-0479">Metal-binding</keyword>
<keyword id="KW-1185">Reference proteome</keyword>
<protein>
    <recommendedName>
        <fullName>GTP cyclohydrolase 1 type 2 homolog</fullName>
    </recommendedName>
</protein>
<accession>Q89AJ8</accession>
<gene>
    <name type="ordered locus">bbp_279</name>
</gene>
<name>GCH1L_BUCBP</name>
<reference key="1">
    <citation type="journal article" date="2003" name="Proc. Natl. Acad. Sci. U.S.A.">
        <title>Reductive genome evolution in Buchnera aphidicola.</title>
        <authorList>
            <person name="van Ham R.C.H.J."/>
            <person name="Kamerbeek J."/>
            <person name="Palacios C."/>
            <person name="Rausell C."/>
            <person name="Abascal F."/>
            <person name="Bastolla U."/>
            <person name="Fernandez J.M."/>
            <person name="Jimenez L."/>
            <person name="Postigo M."/>
            <person name="Silva F.J."/>
            <person name="Tamames J."/>
            <person name="Viguera E."/>
            <person name="Latorre A."/>
            <person name="Valencia A."/>
            <person name="Moran F."/>
            <person name="Moya A."/>
        </authorList>
    </citation>
    <scope>NUCLEOTIDE SEQUENCE [LARGE SCALE GENOMIC DNA]</scope>
    <source>
        <strain>Bp</strain>
    </source>
</reference>